<gene>
    <name evidence="1" type="primary">add</name>
    <name type="ordered locus">VF_0093</name>
    <name type="ORF">VF0092</name>
</gene>
<dbReference type="EC" id="3.5.4.4" evidence="1"/>
<dbReference type="EMBL" id="CP000020">
    <property type="protein sequence ID" value="AAW84588.2"/>
    <property type="molecule type" value="Genomic_DNA"/>
</dbReference>
<dbReference type="RefSeq" id="WP_011260963.1">
    <property type="nucleotide sequence ID" value="NC_006840.2"/>
</dbReference>
<dbReference type="RefSeq" id="YP_203476.2">
    <property type="nucleotide sequence ID" value="NC_006840.2"/>
</dbReference>
<dbReference type="SMR" id="Q5E8Q8"/>
<dbReference type="STRING" id="312309.VF_0093"/>
<dbReference type="EnsemblBacteria" id="AAW84588">
    <property type="protein sequence ID" value="AAW84588"/>
    <property type="gene ID" value="VF_0093"/>
</dbReference>
<dbReference type="GeneID" id="54162720"/>
<dbReference type="KEGG" id="vfi:VF_0093"/>
<dbReference type="PATRIC" id="fig|312309.11.peg.92"/>
<dbReference type="eggNOG" id="COG1816">
    <property type="taxonomic scope" value="Bacteria"/>
</dbReference>
<dbReference type="HOGENOM" id="CLU_039228_0_2_6"/>
<dbReference type="OrthoDB" id="105475at2"/>
<dbReference type="Proteomes" id="UP000000537">
    <property type="component" value="Chromosome I"/>
</dbReference>
<dbReference type="GO" id="GO:0005829">
    <property type="term" value="C:cytosol"/>
    <property type="evidence" value="ECO:0007669"/>
    <property type="project" value="TreeGrafter"/>
</dbReference>
<dbReference type="GO" id="GO:0046936">
    <property type="term" value="F:2'-deoxyadenosine deaminase activity"/>
    <property type="evidence" value="ECO:0007669"/>
    <property type="project" value="RHEA"/>
</dbReference>
<dbReference type="GO" id="GO:0004000">
    <property type="term" value="F:adenosine deaminase activity"/>
    <property type="evidence" value="ECO:0007669"/>
    <property type="project" value="UniProtKB-UniRule"/>
</dbReference>
<dbReference type="GO" id="GO:0008270">
    <property type="term" value="F:zinc ion binding"/>
    <property type="evidence" value="ECO:0007669"/>
    <property type="project" value="UniProtKB-UniRule"/>
</dbReference>
<dbReference type="GO" id="GO:0006154">
    <property type="term" value="P:adenosine catabolic process"/>
    <property type="evidence" value="ECO:0007669"/>
    <property type="project" value="TreeGrafter"/>
</dbReference>
<dbReference type="GO" id="GO:0043103">
    <property type="term" value="P:hypoxanthine salvage"/>
    <property type="evidence" value="ECO:0007669"/>
    <property type="project" value="TreeGrafter"/>
</dbReference>
<dbReference type="GO" id="GO:0046103">
    <property type="term" value="P:inosine biosynthetic process"/>
    <property type="evidence" value="ECO:0007669"/>
    <property type="project" value="TreeGrafter"/>
</dbReference>
<dbReference type="GO" id="GO:0009117">
    <property type="term" value="P:nucleotide metabolic process"/>
    <property type="evidence" value="ECO:0007669"/>
    <property type="project" value="UniProtKB-KW"/>
</dbReference>
<dbReference type="GO" id="GO:0009168">
    <property type="term" value="P:purine ribonucleoside monophosphate biosynthetic process"/>
    <property type="evidence" value="ECO:0007669"/>
    <property type="project" value="UniProtKB-UniRule"/>
</dbReference>
<dbReference type="CDD" id="cd01320">
    <property type="entry name" value="ADA"/>
    <property type="match status" value="1"/>
</dbReference>
<dbReference type="FunFam" id="3.20.20.140:FF:000009">
    <property type="entry name" value="Adenosine deaminase"/>
    <property type="match status" value="1"/>
</dbReference>
<dbReference type="Gene3D" id="3.20.20.140">
    <property type="entry name" value="Metal-dependent hydrolases"/>
    <property type="match status" value="1"/>
</dbReference>
<dbReference type="HAMAP" id="MF_00540">
    <property type="entry name" value="A_deaminase"/>
    <property type="match status" value="1"/>
</dbReference>
<dbReference type="InterPro" id="IPR028893">
    <property type="entry name" value="A_deaminase"/>
</dbReference>
<dbReference type="InterPro" id="IPR001365">
    <property type="entry name" value="A_deaminase_dom"/>
</dbReference>
<dbReference type="InterPro" id="IPR006330">
    <property type="entry name" value="Ado/ade_deaminase"/>
</dbReference>
<dbReference type="InterPro" id="IPR032466">
    <property type="entry name" value="Metal_Hydrolase"/>
</dbReference>
<dbReference type="NCBIfam" id="TIGR01430">
    <property type="entry name" value="aden_deam"/>
    <property type="match status" value="1"/>
</dbReference>
<dbReference type="NCBIfam" id="NF006846">
    <property type="entry name" value="PRK09358.1-1"/>
    <property type="match status" value="1"/>
</dbReference>
<dbReference type="PANTHER" id="PTHR11409">
    <property type="entry name" value="ADENOSINE DEAMINASE"/>
    <property type="match status" value="1"/>
</dbReference>
<dbReference type="PANTHER" id="PTHR11409:SF43">
    <property type="entry name" value="ADENOSINE DEAMINASE"/>
    <property type="match status" value="1"/>
</dbReference>
<dbReference type="Pfam" id="PF00962">
    <property type="entry name" value="A_deaminase"/>
    <property type="match status" value="1"/>
</dbReference>
<dbReference type="SUPFAM" id="SSF51556">
    <property type="entry name" value="Metallo-dependent hydrolases"/>
    <property type="match status" value="1"/>
</dbReference>
<comment type="function">
    <text evidence="1">Catalyzes the hydrolytic deamination of adenosine and 2-deoxyadenosine.</text>
</comment>
<comment type="catalytic activity">
    <reaction evidence="1">
        <text>adenosine + H2O + H(+) = inosine + NH4(+)</text>
        <dbReference type="Rhea" id="RHEA:24408"/>
        <dbReference type="ChEBI" id="CHEBI:15377"/>
        <dbReference type="ChEBI" id="CHEBI:15378"/>
        <dbReference type="ChEBI" id="CHEBI:16335"/>
        <dbReference type="ChEBI" id="CHEBI:17596"/>
        <dbReference type="ChEBI" id="CHEBI:28938"/>
        <dbReference type="EC" id="3.5.4.4"/>
    </reaction>
    <physiologicalReaction direction="left-to-right" evidence="1">
        <dbReference type="Rhea" id="RHEA:24409"/>
    </physiologicalReaction>
</comment>
<comment type="catalytic activity">
    <reaction evidence="1">
        <text>2'-deoxyadenosine + H2O + H(+) = 2'-deoxyinosine + NH4(+)</text>
        <dbReference type="Rhea" id="RHEA:28190"/>
        <dbReference type="ChEBI" id="CHEBI:15377"/>
        <dbReference type="ChEBI" id="CHEBI:15378"/>
        <dbReference type="ChEBI" id="CHEBI:17256"/>
        <dbReference type="ChEBI" id="CHEBI:28938"/>
        <dbReference type="ChEBI" id="CHEBI:28997"/>
        <dbReference type="EC" id="3.5.4.4"/>
    </reaction>
    <physiologicalReaction direction="left-to-right" evidence="1">
        <dbReference type="Rhea" id="RHEA:28191"/>
    </physiologicalReaction>
</comment>
<comment type="cofactor">
    <cofactor evidence="1">
        <name>Zn(2+)</name>
        <dbReference type="ChEBI" id="CHEBI:29105"/>
    </cofactor>
    <text evidence="1">Binds 1 zinc ion per subunit.</text>
</comment>
<comment type="similarity">
    <text evidence="1">Belongs to the metallo-dependent hydrolases superfamily. Adenosine and AMP deaminases family. Adenosine deaminase subfamily.</text>
</comment>
<protein>
    <recommendedName>
        <fullName evidence="1">Adenosine deaminase</fullName>
        <ecNumber evidence="1">3.5.4.4</ecNumber>
    </recommendedName>
    <alternativeName>
        <fullName evidence="1">Adenosine aminohydrolase</fullName>
    </alternativeName>
</protein>
<proteinExistence type="inferred from homology"/>
<organism>
    <name type="scientific">Aliivibrio fischeri (strain ATCC 700601 / ES114)</name>
    <name type="common">Vibrio fischeri</name>
    <dbReference type="NCBI Taxonomy" id="312309"/>
    <lineage>
        <taxon>Bacteria</taxon>
        <taxon>Pseudomonadati</taxon>
        <taxon>Pseudomonadota</taxon>
        <taxon>Gammaproteobacteria</taxon>
        <taxon>Vibrionales</taxon>
        <taxon>Vibrionaceae</taxon>
        <taxon>Aliivibrio</taxon>
    </lineage>
</organism>
<reference key="1">
    <citation type="journal article" date="2005" name="Proc. Natl. Acad. Sci. U.S.A.">
        <title>Complete genome sequence of Vibrio fischeri: a symbiotic bacterium with pathogenic congeners.</title>
        <authorList>
            <person name="Ruby E.G."/>
            <person name="Urbanowski M."/>
            <person name="Campbell J."/>
            <person name="Dunn A."/>
            <person name="Faini M."/>
            <person name="Gunsalus R."/>
            <person name="Lostroh P."/>
            <person name="Lupp C."/>
            <person name="McCann J."/>
            <person name="Millikan D."/>
            <person name="Schaefer A."/>
            <person name="Stabb E."/>
            <person name="Stevens A."/>
            <person name="Visick K."/>
            <person name="Whistler C."/>
            <person name="Greenberg E.P."/>
        </authorList>
    </citation>
    <scope>NUCLEOTIDE SEQUENCE [LARGE SCALE GENOMIC DNA]</scope>
    <source>
        <strain>ATCC 700601 / ES114</strain>
    </source>
</reference>
<reference key="2">
    <citation type="journal article" date="2008" name="BMC Genomics">
        <title>Comparative genomics-based investigation of resequencing targets in Vibrio fischeri: focus on point miscalls and artefactual expansions.</title>
        <authorList>
            <person name="Mandel M.J."/>
            <person name="Stabb E.V."/>
            <person name="Ruby E.G."/>
        </authorList>
    </citation>
    <scope>SEQUENCE REVISION</scope>
</reference>
<keyword id="KW-0378">Hydrolase</keyword>
<keyword id="KW-0479">Metal-binding</keyword>
<keyword id="KW-0546">Nucleotide metabolism</keyword>
<keyword id="KW-1185">Reference proteome</keyword>
<keyword id="KW-0862">Zinc</keyword>
<name>ADD_ALIF1</name>
<evidence type="ECO:0000255" key="1">
    <source>
        <dbReference type="HAMAP-Rule" id="MF_00540"/>
    </source>
</evidence>
<sequence length="333" mass="36466">MIIKQLPLTDLHRHLDGNIRIETILDLGQKFGLDLPAYDIEALRPHVQIVEAEPSLVAFLSKLDWGVAVLGDLDACRRVAYENVQDAMNAQIDYAELRFSPYYMAMKHNLPIAGVVEAVVDGVEAGCRDFGIKANLIGIMSRTFGQDACQQELDGLLTQKHKLVAIDLAGDELGQPGDLFVNHFKQVKDADLRVTVHAGEAAGAASMWQAINELGAVRIGHGVKAIEDPKLMEYLAKNNIGIESCLTSNIQTSTVASFESHPIKTFLDYGVKVCLNTDDPAVEGIELPHEYEVAAPKVGLTPEQLKQIQINGLDLAFLSDSEKQALREMAAKR</sequence>
<accession>Q5E8Q8</accession>
<feature type="chain" id="PRO_1000128872" description="Adenosine deaminase">
    <location>
        <begin position="1"/>
        <end position="333"/>
    </location>
</feature>
<feature type="active site" description="Proton donor" evidence="1">
    <location>
        <position position="200"/>
    </location>
</feature>
<feature type="binding site" evidence="1">
    <location>
        <position position="12"/>
    </location>
    <ligand>
        <name>Zn(2+)</name>
        <dbReference type="ChEBI" id="CHEBI:29105"/>
        <note>catalytic</note>
    </ligand>
</feature>
<feature type="binding site" evidence="1">
    <location>
        <position position="14"/>
    </location>
    <ligand>
        <name>substrate</name>
    </ligand>
</feature>
<feature type="binding site" evidence="1">
    <location>
        <position position="14"/>
    </location>
    <ligand>
        <name>Zn(2+)</name>
        <dbReference type="ChEBI" id="CHEBI:29105"/>
        <note>catalytic</note>
    </ligand>
</feature>
<feature type="binding site" evidence="1">
    <location>
        <position position="16"/>
    </location>
    <ligand>
        <name>substrate</name>
    </ligand>
</feature>
<feature type="binding site" evidence="1">
    <location>
        <position position="170"/>
    </location>
    <ligand>
        <name>substrate</name>
    </ligand>
</feature>
<feature type="binding site" evidence="1">
    <location>
        <position position="197"/>
    </location>
    <ligand>
        <name>Zn(2+)</name>
        <dbReference type="ChEBI" id="CHEBI:29105"/>
        <note>catalytic</note>
    </ligand>
</feature>
<feature type="binding site" evidence="1">
    <location>
        <position position="278"/>
    </location>
    <ligand>
        <name>Zn(2+)</name>
        <dbReference type="ChEBI" id="CHEBI:29105"/>
        <note>catalytic</note>
    </ligand>
</feature>
<feature type="binding site" evidence="1">
    <location>
        <position position="279"/>
    </location>
    <ligand>
        <name>substrate</name>
    </ligand>
</feature>
<feature type="site" description="Important for catalytic activity" evidence="1">
    <location>
        <position position="221"/>
    </location>
</feature>